<gene>
    <name type="primary">msp-4</name>
    <name type="synonym">syf2</name>
    <name type="ORF">NCU00361</name>
</gene>
<evidence type="ECO:0000250" key="1"/>
<evidence type="ECO:0000256" key="2">
    <source>
        <dbReference type="SAM" id="MobiDB-lite"/>
    </source>
</evidence>
<evidence type="ECO:0000305" key="3"/>
<accession>Q7RZK5</accession>
<keyword id="KW-0507">mRNA processing</keyword>
<keyword id="KW-0508">mRNA splicing</keyword>
<keyword id="KW-0539">Nucleus</keyword>
<keyword id="KW-1185">Reference proteome</keyword>
<keyword id="KW-0747">Spliceosome</keyword>
<sequence length="339" mass="37962">MPPEKKRKTEPEDKAEVTQQENDVAESTTEPNNQTVTDSKEEPSVTEAALATTSSSSPPVLSASETAQPDTAATSQSSSTPPTSTSAAESAAAKARERAERFRALQARAKSSSQQNLKKATKESQRLQSDPSQLTALGRRHAIASHKLLKADIEDAGGDFERKRAWDWTVEESERWDKRMKKKEAHRDDTAFRDYNQQAEKSYKRQLRNMGGPDLERYTREKLAAIEKAAAAGTLEIVETEDGEMIAIDKDGTFFSTADSTQFAQHKPDKAAVDRLVADMRKAEEASLKKRRERMANNGDDADVTYINEKNKQFNQKLSRFYNKYTAEIRDSFERGTMV</sequence>
<comment type="function">
    <text evidence="1">Involved in pre-mRNA splicing.</text>
</comment>
<comment type="subunit">
    <text evidence="1">Associated with the spliceosome.</text>
</comment>
<comment type="subcellular location">
    <subcellularLocation>
        <location evidence="1">Nucleus</location>
    </subcellularLocation>
</comment>
<comment type="similarity">
    <text evidence="3">Belongs to the SYF2 family.</text>
</comment>
<organism>
    <name type="scientific">Neurospora crassa (strain ATCC 24698 / 74-OR23-1A / CBS 708.71 / DSM 1257 / FGSC 987)</name>
    <dbReference type="NCBI Taxonomy" id="367110"/>
    <lineage>
        <taxon>Eukaryota</taxon>
        <taxon>Fungi</taxon>
        <taxon>Dikarya</taxon>
        <taxon>Ascomycota</taxon>
        <taxon>Pezizomycotina</taxon>
        <taxon>Sordariomycetes</taxon>
        <taxon>Sordariomycetidae</taxon>
        <taxon>Sordariales</taxon>
        <taxon>Sordariaceae</taxon>
        <taxon>Neurospora</taxon>
    </lineage>
</organism>
<protein>
    <recommendedName>
        <fullName>Pre-mRNA-splicing factor syf2</fullName>
    </recommendedName>
    <alternativeName>
        <fullName>mRNA-splicing protein 4</fullName>
    </alternativeName>
</protein>
<reference key="1">
    <citation type="journal article" date="2003" name="Nature">
        <title>The genome sequence of the filamentous fungus Neurospora crassa.</title>
        <authorList>
            <person name="Galagan J.E."/>
            <person name="Calvo S.E."/>
            <person name="Borkovich K.A."/>
            <person name="Selker E.U."/>
            <person name="Read N.D."/>
            <person name="Jaffe D.B."/>
            <person name="FitzHugh W."/>
            <person name="Ma L.-J."/>
            <person name="Smirnov S."/>
            <person name="Purcell S."/>
            <person name="Rehman B."/>
            <person name="Elkins T."/>
            <person name="Engels R."/>
            <person name="Wang S."/>
            <person name="Nielsen C.B."/>
            <person name="Butler J."/>
            <person name="Endrizzi M."/>
            <person name="Qui D."/>
            <person name="Ianakiev P."/>
            <person name="Bell-Pedersen D."/>
            <person name="Nelson M.A."/>
            <person name="Werner-Washburne M."/>
            <person name="Selitrennikoff C.P."/>
            <person name="Kinsey J.A."/>
            <person name="Braun E.L."/>
            <person name="Zelter A."/>
            <person name="Schulte U."/>
            <person name="Kothe G.O."/>
            <person name="Jedd G."/>
            <person name="Mewes H.-W."/>
            <person name="Staben C."/>
            <person name="Marcotte E."/>
            <person name="Greenberg D."/>
            <person name="Roy A."/>
            <person name="Foley K."/>
            <person name="Naylor J."/>
            <person name="Stange-Thomann N."/>
            <person name="Barrett R."/>
            <person name="Gnerre S."/>
            <person name="Kamal M."/>
            <person name="Kamvysselis M."/>
            <person name="Mauceli E.W."/>
            <person name="Bielke C."/>
            <person name="Rudd S."/>
            <person name="Frishman D."/>
            <person name="Krystofova S."/>
            <person name="Rasmussen C."/>
            <person name="Metzenberg R.L."/>
            <person name="Perkins D.D."/>
            <person name="Kroken S."/>
            <person name="Cogoni C."/>
            <person name="Macino G."/>
            <person name="Catcheside D.E.A."/>
            <person name="Li W."/>
            <person name="Pratt R.J."/>
            <person name="Osmani S.A."/>
            <person name="DeSouza C.P.C."/>
            <person name="Glass N.L."/>
            <person name="Orbach M.J."/>
            <person name="Berglund J.A."/>
            <person name="Voelker R."/>
            <person name="Yarden O."/>
            <person name="Plamann M."/>
            <person name="Seiler S."/>
            <person name="Dunlap J.C."/>
            <person name="Radford A."/>
            <person name="Aramayo R."/>
            <person name="Natvig D.O."/>
            <person name="Alex L.A."/>
            <person name="Mannhaupt G."/>
            <person name="Ebbole D.J."/>
            <person name="Freitag M."/>
            <person name="Paulsen I."/>
            <person name="Sachs M.S."/>
            <person name="Lander E.S."/>
            <person name="Nusbaum C."/>
            <person name="Birren B.W."/>
        </authorList>
    </citation>
    <scope>NUCLEOTIDE SEQUENCE [LARGE SCALE GENOMIC DNA]</scope>
    <source>
        <strain>ATCC 24698 / 74-OR23-1A / CBS 708.71 / DSM 1257 / FGSC 987</strain>
    </source>
</reference>
<dbReference type="EMBL" id="CM002238">
    <property type="protein sequence ID" value="EAA28596.1"/>
    <property type="molecule type" value="Genomic_DNA"/>
</dbReference>
<dbReference type="RefSeq" id="XP_957832.1">
    <property type="nucleotide sequence ID" value="XM_952739.2"/>
</dbReference>
<dbReference type="SMR" id="Q7RZK5"/>
<dbReference type="FunCoup" id="Q7RZK5">
    <property type="interactions" value="114"/>
</dbReference>
<dbReference type="STRING" id="367110.Q7RZK5"/>
<dbReference type="PaxDb" id="5141-EFNCRP00000000427"/>
<dbReference type="EnsemblFungi" id="EAA28596">
    <property type="protein sequence ID" value="EAA28596"/>
    <property type="gene ID" value="NCU00361"/>
</dbReference>
<dbReference type="GeneID" id="3873859"/>
<dbReference type="KEGG" id="ncr:NCU00361"/>
<dbReference type="VEuPathDB" id="FungiDB:NCU00361"/>
<dbReference type="HOGENOM" id="CLU_051065_0_1_1"/>
<dbReference type="InParanoid" id="Q7RZK5"/>
<dbReference type="OrthoDB" id="199717at2759"/>
<dbReference type="Proteomes" id="UP000001805">
    <property type="component" value="Chromosome 3, Linkage Group III"/>
</dbReference>
<dbReference type="GO" id="GO:0071013">
    <property type="term" value="C:catalytic step 2 spliceosome"/>
    <property type="evidence" value="ECO:0000318"/>
    <property type="project" value="GO_Central"/>
</dbReference>
<dbReference type="GO" id="GO:0071014">
    <property type="term" value="C:post-mRNA release spliceosomal complex"/>
    <property type="evidence" value="ECO:0000318"/>
    <property type="project" value="GO_Central"/>
</dbReference>
<dbReference type="GO" id="GO:0000974">
    <property type="term" value="C:Prp19 complex"/>
    <property type="evidence" value="ECO:0000318"/>
    <property type="project" value="GO_Central"/>
</dbReference>
<dbReference type="GO" id="GO:0006397">
    <property type="term" value="P:mRNA processing"/>
    <property type="evidence" value="ECO:0007669"/>
    <property type="project" value="UniProtKB-KW"/>
</dbReference>
<dbReference type="GO" id="GO:0008380">
    <property type="term" value="P:RNA splicing"/>
    <property type="evidence" value="ECO:0007669"/>
    <property type="project" value="UniProtKB-KW"/>
</dbReference>
<dbReference type="InterPro" id="IPR013260">
    <property type="entry name" value="mRNA_splic_SYF2"/>
</dbReference>
<dbReference type="PANTHER" id="PTHR13264">
    <property type="entry name" value="GCIP-INTERACTING PROTEIN P29"/>
    <property type="match status" value="1"/>
</dbReference>
<dbReference type="PANTHER" id="PTHR13264:SF5">
    <property type="entry name" value="PRE-MRNA-SPLICING FACTOR SYF2"/>
    <property type="match status" value="1"/>
</dbReference>
<dbReference type="Pfam" id="PF08231">
    <property type="entry name" value="SYF2"/>
    <property type="match status" value="1"/>
</dbReference>
<name>SYF2_NEUCR</name>
<feature type="chain" id="PRO_0000072378" description="Pre-mRNA-splicing factor syf2">
    <location>
        <begin position="1"/>
        <end position="339"/>
    </location>
</feature>
<feature type="region of interest" description="Disordered" evidence="2">
    <location>
        <begin position="1"/>
        <end position="136"/>
    </location>
</feature>
<feature type="compositionally biased region" description="Basic and acidic residues" evidence="2">
    <location>
        <begin position="7"/>
        <end position="16"/>
    </location>
</feature>
<feature type="compositionally biased region" description="Polar residues" evidence="2">
    <location>
        <begin position="17"/>
        <end position="37"/>
    </location>
</feature>
<feature type="compositionally biased region" description="Low complexity" evidence="2">
    <location>
        <begin position="45"/>
        <end position="93"/>
    </location>
</feature>
<feature type="compositionally biased region" description="Basic and acidic residues" evidence="2">
    <location>
        <begin position="94"/>
        <end position="103"/>
    </location>
</feature>
<feature type="compositionally biased region" description="Polar residues" evidence="2">
    <location>
        <begin position="126"/>
        <end position="135"/>
    </location>
</feature>
<proteinExistence type="inferred from homology"/>